<accession>B7L508</accession>
<keyword id="KW-0058">Aromatic hydrocarbons catabolism</keyword>
<keyword id="KW-0456">Lyase</keyword>
<keyword id="KW-0464">Manganese</keyword>
<keyword id="KW-0479">Metal-binding</keyword>
<keyword id="KW-1185">Reference proteome</keyword>
<proteinExistence type="inferred from homology"/>
<protein>
    <recommendedName>
        <fullName evidence="1">4-hydroxy-2-oxovalerate aldolase</fullName>
        <shortName evidence="1">HOA</shortName>
        <ecNumber evidence="1">4.1.3.39</ecNumber>
    </recommendedName>
    <alternativeName>
        <fullName evidence="1">4-hydroxy-2-keto-pentanoic acid aldolase</fullName>
    </alternativeName>
    <alternativeName>
        <fullName evidence="1">4-hydroxy-2-oxopentanoate aldolase</fullName>
    </alternativeName>
</protein>
<name>HOA_ECO55</name>
<comment type="function">
    <text evidence="1">Catalyzes the retro-aldol cleavage of 4-hydroxy-2-oxopentanoate to pyruvate and acetaldehyde. Is involved in the meta-cleavage pathway for the degradation of aromatic compounds.</text>
</comment>
<comment type="catalytic activity">
    <reaction evidence="1">
        <text>(S)-4-hydroxy-2-oxopentanoate = acetaldehyde + pyruvate</text>
        <dbReference type="Rhea" id="RHEA:22624"/>
        <dbReference type="ChEBI" id="CHEBI:15343"/>
        <dbReference type="ChEBI" id="CHEBI:15361"/>
        <dbReference type="ChEBI" id="CHEBI:73143"/>
        <dbReference type="EC" id="4.1.3.39"/>
    </reaction>
</comment>
<comment type="pathway">
    <text evidence="1">Aromatic compound metabolism; 3-phenylpropanoate degradation.</text>
</comment>
<comment type="subunit">
    <text evidence="1">Interacts with MhpF.</text>
</comment>
<comment type="similarity">
    <text evidence="1">Belongs to the 4-hydroxy-2-oxovalerate aldolase family.</text>
</comment>
<dbReference type="EC" id="4.1.3.39" evidence="1"/>
<dbReference type="EMBL" id="CU928145">
    <property type="protein sequence ID" value="CAU96236.1"/>
    <property type="molecule type" value="Genomic_DNA"/>
</dbReference>
<dbReference type="RefSeq" id="WP_001013499.1">
    <property type="nucleotide sequence ID" value="NC_011748.1"/>
</dbReference>
<dbReference type="SMR" id="B7L508"/>
<dbReference type="GeneID" id="75202515"/>
<dbReference type="KEGG" id="eck:EC55989_0359"/>
<dbReference type="HOGENOM" id="CLU_049173_0_0_6"/>
<dbReference type="UniPathway" id="UPA00714"/>
<dbReference type="Proteomes" id="UP000000746">
    <property type="component" value="Chromosome"/>
</dbReference>
<dbReference type="GO" id="GO:0003852">
    <property type="term" value="F:2-isopropylmalate synthase activity"/>
    <property type="evidence" value="ECO:0007669"/>
    <property type="project" value="TreeGrafter"/>
</dbReference>
<dbReference type="GO" id="GO:0008701">
    <property type="term" value="F:4-hydroxy-2-oxovalerate aldolase activity"/>
    <property type="evidence" value="ECO:0007669"/>
    <property type="project" value="UniProtKB-UniRule"/>
</dbReference>
<dbReference type="GO" id="GO:0030145">
    <property type="term" value="F:manganese ion binding"/>
    <property type="evidence" value="ECO:0007669"/>
    <property type="project" value="UniProtKB-UniRule"/>
</dbReference>
<dbReference type="GO" id="GO:0019380">
    <property type="term" value="P:3-phenylpropionate catabolic process"/>
    <property type="evidence" value="ECO:0007669"/>
    <property type="project" value="UniProtKB-UniRule"/>
</dbReference>
<dbReference type="GO" id="GO:0009098">
    <property type="term" value="P:L-leucine biosynthetic process"/>
    <property type="evidence" value="ECO:0007669"/>
    <property type="project" value="TreeGrafter"/>
</dbReference>
<dbReference type="CDD" id="cd07943">
    <property type="entry name" value="DRE_TIM_HOA"/>
    <property type="match status" value="1"/>
</dbReference>
<dbReference type="FunFam" id="1.10.8.60:FF:000042">
    <property type="entry name" value="4-hydroxy-2-oxovalerate aldolase"/>
    <property type="match status" value="1"/>
</dbReference>
<dbReference type="FunFam" id="3.20.20.70:FF:000072">
    <property type="entry name" value="4-hydroxy-2-oxovalerate aldolase"/>
    <property type="match status" value="1"/>
</dbReference>
<dbReference type="Gene3D" id="1.10.8.60">
    <property type="match status" value="1"/>
</dbReference>
<dbReference type="Gene3D" id="3.20.20.70">
    <property type="entry name" value="Aldolase class I"/>
    <property type="match status" value="1"/>
</dbReference>
<dbReference type="HAMAP" id="MF_01656">
    <property type="entry name" value="HOA"/>
    <property type="match status" value="1"/>
</dbReference>
<dbReference type="InterPro" id="IPR050073">
    <property type="entry name" value="2-IPM_HCS-like"/>
</dbReference>
<dbReference type="InterPro" id="IPR017629">
    <property type="entry name" value="4OH_2_O-val_aldolase"/>
</dbReference>
<dbReference type="InterPro" id="IPR013785">
    <property type="entry name" value="Aldolase_TIM"/>
</dbReference>
<dbReference type="InterPro" id="IPR012425">
    <property type="entry name" value="DmpG_comm"/>
</dbReference>
<dbReference type="InterPro" id="IPR035685">
    <property type="entry name" value="DRE_TIM_HOA"/>
</dbReference>
<dbReference type="InterPro" id="IPR000891">
    <property type="entry name" value="PYR_CT"/>
</dbReference>
<dbReference type="NCBIfam" id="TIGR03217">
    <property type="entry name" value="4OH_2_O_val_ald"/>
    <property type="match status" value="1"/>
</dbReference>
<dbReference type="NCBIfam" id="NF006049">
    <property type="entry name" value="PRK08195.1"/>
    <property type="match status" value="1"/>
</dbReference>
<dbReference type="PANTHER" id="PTHR10277:SF9">
    <property type="entry name" value="2-ISOPROPYLMALATE SYNTHASE 1, CHLOROPLASTIC-RELATED"/>
    <property type="match status" value="1"/>
</dbReference>
<dbReference type="PANTHER" id="PTHR10277">
    <property type="entry name" value="HOMOCITRATE SYNTHASE-RELATED"/>
    <property type="match status" value="1"/>
</dbReference>
<dbReference type="Pfam" id="PF07836">
    <property type="entry name" value="DmpG_comm"/>
    <property type="match status" value="1"/>
</dbReference>
<dbReference type="Pfam" id="PF00682">
    <property type="entry name" value="HMGL-like"/>
    <property type="match status" value="1"/>
</dbReference>
<dbReference type="SUPFAM" id="SSF51569">
    <property type="entry name" value="Aldolase"/>
    <property type="match status" value="1"/>
</dbReference>
<dbReference type="SUPFAM" id="SSF89000">
    <property type="entry name" value="post-HMGL domain-like"/>
    <property type="match status" value="1"/>
</dbReference>
<dbReference type="PROSITE" id="PS50991">
    <property type="entry name" value="PYR_CT"/>
    <property type="match status" value="1"/>
</dbReference>
<reference key="1">
    <citation type="journal article" date="2009" name="PLoS Genet.">
        <title>Organised genome dynamics in the Escherichia coli species results in highly diverse adaptive paths.</title>
        <authorList>
            <person name="Touchon M."/>
            <person name="Hoede C."/>
            <person name="Tenaillon O."/>
            <person name="Barbe V."/>
            <person name="Baeriswyl S."/>
            <person name="Bidet P."/>
            <person name="Bingen E."/>
            <person name="Bonacorsi S."/>
            <person name="Bouchier C."/>
            <person name="Bouvet O."/>
            <person name="Calteau A."/>
            <person name="Chiapello H."/>
            <person name="Clermont O."/>
            <person name="Cruveiller S."/>
            <person name="Danchin A."/>
            <person name="Diard M."/>
            <person name="Dossat C."/>
            <person name="Karoui M.E."/>
            <person name="Frapy E."/>
            <person name="Garry L."/>
            <person name="Ghigo J.M."/>
            <person name="Gilles A.M."/>
            <person name="Johnson J."/>
            <person name="Le Bouguenec C."/>
            <person name="Lescat M."/>
            <person name="Mangenot S."/>
            <person name="Martinez-Jehanne V."/>
            <person name="Matic I."/>
            <person name="Nassif X."/>
            <person name="Oztas S."/>
            <person name="Petit M.A."/>
            <person name="Pichon C."/>
            <person name="Rouy Z."/>
            <person name="Ruf C.S."/>
            <person name="Schneider D."/>
            <person name="Tourret J."/>
            <person name="Vacherie B."/>
            <person name="Vallenet D."/>
            <person name="Medigue C."/>
            <person name="Rocha E.P.C."/>
            <person name="Denamur E."/>
        </authorList>
    </citation>
    <scope>NUCLEOTIDE SEQUENCE [LARGE SCALE GENOMIC DNA]</scope>
    <source>
        <strain>55989 / EAEC</strain>
    </source>
</reference>
<gene>
    <name evidence="1" type="primary">mhpE</name>
    <name type="ordered locus">EC55989_0359</name>
</gene>
<evidence type="ECO:0000255" key="1">
    <source>
        <dbReference type="HAMAP-Rule" id="MF_01656"/>
    </source>
</evidence>
<feature type="chain" id="PRO_0000387825" description="4-hydroxy-2-oxovalerate aldolase">
    <location>
        <begin position="1"/>
        <end position="337"/>
    </location>
</feature>
<feature type="domain" description="Pyruvate carboxyltransferase" evidence="1">
    <location>
        <begin position="6"/>
        <end position="258"/>
    </location>
</feature>
<feature type="active site" description="Proton acceptor" evidence="1">
    <location>
        <position position="18"/>
    </location>
</feature>
<feature type="binding site" evidence="1">
    <location>
        <begin position="14"/>
        <end position="15"/>
    </location>
    <ligand>
        <name>substrate</name>
    </ligand>
</feature>
<feature type="binding site" evidence="1">
    <location>
        <position position="15"/>
    </location>
    <ligand>
        <name>Mn(2+)</name>
        <dbReference type="ChEBI" id="CHEBI:29035"/>
    </ligand>
</feature>
<feature type="binding site" evidence="1">
    <location>
        <position position="168"/>
    </location>
    <ligand>
        <name>substrate</name>
    </ligand>
</feature>
<feature type="binding site" evidence="1">
    <location>
        <position position="197"/>
    </location>
    <ligand>
        <name>Mn(2+)</name>
        <dbReference type="ChEBI" id="CHEBI:29035"/>
    </ligand>
</feature>
<feature type="binding site" evidence="1">
    <location>
        <position position="197"/>
    </location>
    <ligand>
        <name>substrate</name>
    </ligand>
</feature>
<feature type="binding site" evidence="1">
    <location>
        <position position="199"/>
    </location>
    <ligand>
        <name>Mn(2+)</name>
        <dbReference type="ChEBI" id="CHEBI:29035"/>
    </ligand>
</feature>
<feature type="binding site" evidence="1">
    <location>
        <position position="288"/>
    </location>
    <ligand>
        <name>substrate</name>
    </ligand>
</feature>
<feature type="site" description="Transition state stabilizer" evidence="1">
    <location>
        <position position="14"/>
    </location>
</feature>
<sequence>MNGKKLYISDVTLRDGMHAIRHQYSLENVRQIAKALDDARVDSIEVAHGDGLQGSSFNYGFGAHSDLEWIEAAADVVKHAKIATLLLPGIGTIHDLKNAWQAGARVVRVATHCTEADVSAQHIQYARELGMDTVGFLMMSHMTTPENLAKQAKLMEGYGATCIYVVDSGGAMNMSDIRDRFRALKAELKPETQTGMHAHHNLSLGVANSIAAVEEGCDRIDASLAGMGAGAGNAPLEVFIAAADKLGWQHGTDLYALMDAADDLVRPLQDRPVRVDRETLALGYAGVYSSFLRHCETAAARYGLSAVDILVELGKRRMVGGQEDMIVDVALDLRNNK</sequence>
<organism>
    <name type="scientific">Escherichia coli (strain 55989 / EAEC)</name>
    <dbReference type="NCBI Taxonomy" id="585055"/>
    <lineage>
        <taxon>Bacteria</taxon>
        <taxon>Pseudomonadati</taxon>
        <taxon>Pseudomonadota</taxon>
        <taxon>Gammaproteobacteria</taxon>
        <taxon>Enterobacterales</taxon>
        <taxon>Enterobacteriaceae</taxon>
        <taxon>Escherichia</taxon>
    </lineage>
</organism>